<keyword id="KW-0002">3D-structure</keyword>
<keyword id="KW-0119">Carbohydrate metabolism</keyword>
<keyword id="KW-0961">Cell wall biogenesis/degradation</keyword>
<keyword id="KW-1015">Disulfide bond</keyword>
<keyword id="KW-0326">Glycosidase</keyword>
<keyword id="KW-0378">Hydrolase</keyword>
<keyword id="KW-0624">Polysaccharide degradation</keyword>
<keyword id="KW-0964">Secreted</keyword>
<keyword id="KW-0732">Signal</keyword>
<feature type="signal peptide" evidence="2">
    <location>
        <begin position="1"/>
        <end position="23"/>
    </location>
</feature>
<feature type="chain" id="PRO_5000065977" description="Iota-carrageenase" evidence="2">
    <location>
        <begin position="24"/>
        <end position="491"/>
    </location>
</feature>
<feature type="disulfide bond" evidence="4 5">
    <location>
        <begin position="269"/>
        <end position="298"/>
    </location>
</feature>
<feature type="disulfide bond" evidence="4 5">
    <location>
        <begin position="336"/>
        <end position="360"/>
    </location>
</feature>
<feature type="disulfide bond" evidence="4 5">
    <location>
        <begin position="408"/>
        <end position="476"/>
    </location>
</feature>
<feature type="disulfide bond" evidence="4 5">
    <location>
        <begin position="412"/>
        <end position="484"/>
    </location>
</feature>
<feature type="helix" evidence="11">
    <location>
        <begin position="35"/>
        <end position="37"/>
    </location>
</feature>
<feature type="strand" evidence="11">
    <location>
        <begin position="46"/>
        <end position="50"/>
    </location>
</feature>
<feature type="helix" evidence="11">
    <location>
        <begin position="51"/>
        <end position="55"/>
    </location>
</feature>
<feature type="strand" evidence="11">
    <location>
        <begin position="61"/>
        <end position="64"/>
    </location>
</feature>
<feature type="helix" evidence="11">
    <location>
        <begin position="66"/>
        <end position="77"/>
    </location>
</feature>
<feature type="strand" evidence="11">
    <location>
        <begin position="83"/>
        <end position="87"/>
    </location>
</feature>
<feature type="strand" evidence="11">
    <location>
        <begin position="89"/>
        <end position="94"/>
    </location>
</feature>
<feature type="strand" evidence="11">
    <location>
        <begin position="96"/>
        <end position="98"/>
    </location>
</feature>
<feature type="strand" evidence="11">
    <location>
        <begin position="103"/>
        <end position="107"/>
    </location>
</feature>
<feature type="strand" evidence="11">
    <location>
        <begin position="112"/>
        <end position="115"/>
    </location>
</feature>
<feature type="strand" evidence="11">
    <location>
        <begin position="124"/>
        <end position="133"/>
    </location>
</feature>
<feature type="strand" evidence="11">
    <location>
        <begin position="135"/>
        <end position="142"/>
    </location>
</feature>
<feature type="strand" evidence="11">
    <location>
        <begin position="147"/>
        <end position="150"/>
    </location>
</feature>
<feature type="strand" evidence="11">
    <location>
        <begin position="158"/>
        <end position="164"/>
    </location>
</feature>
<feature type="strand" evidence="11">
    <location>
        <begin position="166"/>
        <end position="178"/>
    </location>
</feature>
<feature type="strand" evidence="11">
    <location>
        <begin position="186"/>
        <end position="189"/>
    </location>
</feature>
<feature type="strand" evidence="11">
    <location>
        <begin position="191"/>
        <end position="194"/>
    </location>
</feature>
<feature type="strand" evidence="11">
    <location>
        <begin position="197"/>
        <end position="213"/>
    </location>
</feature>
<feature type="strand" evidence="11">
    <location>
        <begin position="219"/>
        <end position="245"/>
    </location>
</feature>
<feature type="helix" evidence="11">
    <location>
        <begin position="249"/>
        <end position="254"/>
    </location>
</feature>
<feature type="strand" evidence="11">
    <location>
        <begin position="258"/>
        <end position="279"/>
    </location>
</feature>
<feature type="strand" evidence="11">
    <location>
        <begin position="288"/>
        <end position="299"/>
    </location>
</feature>
<feature type="strand" evidence="11">
    <location>
        <begin position="301"/>
        <end position="304"/>
    </location>
</feature>
<feature type="strand" evidence="12">
    <location>
        <begin position="310"/>
        <end position="312"/>
    </location>
</feature>
<feature type="strand" evidence="13">
    <location>
        <begin position="315"/>
        <end position="317"/>
    </location>
</feature>
<feature type="helix" evidence="12">
    <location>
        <begin position="321"/>
        <end position="332"/>
    </location>
</feature>
<feature type="strand" evidence="13">
    <location>
        <begin position="344"/>
        <end position="348"/>
    </location>
</feature>
<feature type="strand" evidence="11">
    <location>
        <begin position="352"/>
        <end position="354"/>
    </location>
</feature>
<feature type="helix" evidence="11">
    <location>
        <begin position="358"/>
        <end position="367"/>
    </location>
</feature>
<feature type="strand" evidence="11">
    <location>
        <begin position="376"/>
        <end position="386"/>
    </location>
</feature>
<feature type="strand" evidence="11">
    <location>
        <begin position="391"/>
        <end position="393"/>
    </location>
</feature>
<feature type="helix" evidence="11">
    <location>
        <begin position="395"/>
        <end position="402"/>
    </location>
</feature>
<feature type="turn" evidence="11">
    <location>
        <begin position="416"/>
        <end position="418"/>
    </location>
</feature>
<feature type="strand" evidence="11">
    <location>
        <begin position="426"/>
        <end position="428"/>
    </location>
</feature>
<feature type="strand" evidence="11">
    <location>
        <begin position="433"/>
        <end position="436"/>
    </location>
</feature>
<feature type="strand" evidence="11">
    <location>
        <begin position="440"/>
        <end position="444"/>
    </location>
</feature>
<feature type="strand" evidence="11">
    <location>
        <begin position="448"/>
        <end position="457"/>
    </location>
</feature>
<feature type="strand" evidence="11">
    <location>
        <begin position="464"/>
        <end position="466"/>
    </location>
</feature>
<feature type="turn" evidence="11">
    <location>
        <begin position="478"/>
        <end position="480"/>
    </location>
</feature>
<feature type="helix" evidence="11">
    <location>
        <begin position="486"/>
        <end position="489"/>
    </location>
</feature>
<gene>
    <name evidence="8" type="primary">cgiA</name>
</gene>
<reference evidence="7 8" key="1">
    <citation type="journal article" date="2000" name="J. Biol. Chem.">
        <title>iota-Carrageenases constitute a novel family of glycoside hydrolases, unrelated to that of kappa-carrageenases.</title>
        <authorList>
            <person name="Barbeyron T."/>
            <person name="Michel G."/>
            <person name="Potin P."/>
            <person name="Henrissat B."/>
            <person name="Kloareg B."/>
        </authorList>
    </citation>
    <scope>NUCLEOTIDE SEQUENCE [GENOMIC DNA]</scope>
    <scope>FUNCTION</scope>
    <scope>CATALYTIC ACTIVITY</scope>
</reference>
<reference evidence="7" key="2">
    <citation type="journal article" date="2010" name="Carbohydr. Res.">
        <title>Enzymatic degradation of hybrid iota-/nu-carrageenan by Alteromonas fortis iota-carrageenase.</title>
        <authorList>
            <person name="Jouanneau D."/>
            <person name="Boulenguer P."/>
            <person name="Mazoyer J."/>
            <person name="Helbert W."/>
        </authorList>
    </citation>
    <scope>FUNCTION</scope>
</reference>
<reference evidence="7 9" key="3">
    <citation type="journal article" date="2001" name="J. Biol. Chem.">
        <title>The iota-carrageenase of Alteromonas fortis. A beta-helix fold-containing enzyme for the degradation of a highly polyanionic polysaccharide.</title>
        <authorList>
            <person name="Michel G."/>
            <person name="Chantalat L."/>
            <person name="Fanchon E."/>
            <person name="Henrissat B."/>
            <person name="Kloareg B."/>
            <person name="Dideberg O."/>
        </authorList>
    </citation>
    <scope>X-RAY CRYSTALLOGRAPHY (1.6 ANGSTROMS) OF 28-491</scope>
    <scope>DISULFIDE BONDS</scope>
</reference>
<reference evidence="7 10" key="4">
    <citation type="journal article" date="2003" name="J. Mol. Biol.">
        <title>The structural bases of the processive degradation of iota-carrageenan, a main cell wall polysaccharide of red algae.</title>
        <authorList>
            <person name="Michel G."/>
            <person name="Helbert W."/>
            <person name="Kahn R."/>
            <person name="Dideberg O."/>
            <person name="Kloareg B."/>
        </authorList>
    </citation>
    <scope>X-RAY CRYSTALLOGRAPHY (2.0 ANGSTROMS) OF 28-491 IN COMPLEX WITH SUBSTRATE</scope>
    <scope>DISULFIDE BONDS</scope>
</reference>
<proteinExistence type="evidence at protein level"/>
<comment type="function">
    <text evidence="1 3 6">Hydrolyzes iota-carrageenans, sulfated 1,3-alpha-1,4-beta galactans from red algal cell walls, with an inversion of anomeric configuration. Also active against hybrid iota-/nu-carrageenan, not active against kappa- or lambda-carrageenans.</text>
</comment>
<comment type="catalytic activity">
    <reaction evidence="3">
        <text>Endohydrolysis of 1,4-beta-D-linkages between D-galactose 4-sulfate and 3,6-anhydro-D-galactose-2-sulfate in iota-carrageenans.</text>
        <dbReference type="EC" id="3.2.1.157"/>
    </reaction>
</comment>
<comment type="subcellular location">
    <subcellularLocation>
        <location evidence="1">Secreted</location>
    </subcellularLocation>
</comment>
<comment type="similarity">
    <text evidence="7">Belongs to the glycosyl hydrolase 82 family.</text>
</comment>
<evidence type="ECO:0000250" key="1">
    <source>
        <dbReference type="UniProtKB" id="Q9F284"/>
    </source>
</evidence>
<evidence type="ECO:0000255" key="2"/>
<evidence type="ECO:0000269" key="3">
    <source>
    </source>
</evidence>
<evidence type="ECO:0000269" key="4">
    <source>
    </source>
</evidence>
<evidence type="ECO:0000269" key="5">
    <source>
    </source>
</evidence>
<evidence type="ECO:0000269" key="6">
    <source>
    </source>
</evidence>
<evidence type="ECO:0000305" key="7"/>
<evidence type="ECO:0000312" key="8">
    <source>
        <dbReference type="EMBL" id="CAC07801.1"/>
    </source>
</evidence>
<evidence type="ECO:0000312" key="9">
    <source>
        <dbReference type="PDB" id="1H80"/>
    </source>
</evidence>
<evidence type="ECO:0000312" key="10">
    <source>
        <dbReference type="PDB" id="1KTW"/>
    </source>
</evidence>
<evidence type="ECO:0007829" key="11">
    <source>
        <dbReference type="PDB" id="1H80"/>
    </source>
</evidence>
<evidence type="ECO:0007829" key="12">
    <source>
        <dbReference type="PDB" id="1KTW"/>
    </source>
</evidence>
<evidence type="ECO:0007829" key="13">
    <source>
        <dbReference type="PDB" id="3LMW"/>
    </source>
</evidence>
<organism>
    <name type="scientific">Alteromonas macleodii</name>
    <name type="common">Pseudoalteromonas macleodii</name>
    <dbReference type="NCBI Taxonomy" id="28108"/>
    <lineage>
        <taxon>Bacteria</taxon>
        <taxon>Pseudomonadati</taxon>
        <taxon>Pseudomonadota</taxon>
        <taxon>Gammaproteobacteria</taxon>
        <taxon>Alteromonadales</taxon>
        <taxon>Alteromonadaceae</taxon>
        <taxon>Alteromonas/Salinimonas group</taxon>
        <taxon>Alteromonas</taxon>
    </lineage>
</organism>
<sequence>MRLYFRKLWLTNLFLGGALASSAAIGAVSPKTYKDADFYVAPTQQDVNYDLVDDFGANGNDTSDDSNALQRAINAISRKPNGGTLLIPNGTYHFLGIQMKSNVHIRVESDVIIKPTWNGDGKNHRLFEVGVNNIVRNFSFQGLGNGFLVDFKDSRDKNLAVFKLGDVRNYKISNFTIDDNKTIFASILVDVTERNGRLHWSRNGIIERIKQNNALFGYGLIQTYGADNILFRNLHSEGGIALRMETDNLLMKNYKQGGIRNIFADNIRCSKGLAAVMFGPHFMKNGDVQVTNVSSVSCGSAVRSDSGFVELFSPTDEVHTRQSWKQAVESKLGRGCAQTPYARGNGGTRWAARVTQKDACLDKAKLEYGIEPGSFGTVKVFDVTARFGYNADLKQDQLDYFSTSNPMCKRVCLPTKEQWSKQGQIYIGPSLAAVIDTTPETSKYDYDVKTFNVKRINFPVNSHKTIDTNTESSRVCNYYGMSECSSSRWER</sequence>
<name>CGIA_ALTMA</name>
<dbReference type="EC" id="3.2.1.157"/>
<dbReference type="EMBL" id="AJ272076">
    <property type="protein sequence ID" value="CAC07801.1"/>
    <property type="molecule type" value="Genomic_DNA"/>
</dbReference>
<dbReference type="RefSeq" id="WP_179983892.1">
    <property type="nucleotide sequence ID" value="NZ_LR812090.1"/>
</dbReference>
<dbReference type="PDB" id="1H80">
    <property type="method" value="X-ray"/>
    <property type="resolution" value="1.60 A"/>
    <property type="chains" value="A/B=28-491"/>
</dbReference>
<dbReference type="PDB" id="1KTW">
    <property type="method" value="X-ray"/>
    <property type="resolution" value="2.00 A"/>
    <property type="chains" value="A/B=28-491"/>
</dbReference>
<dbReference type="PDB" id="3LMW">
    <property type="method" value="X-ray"/>
    <property type="resolution" value="2.60 A"/>
    <property type="chains" value="A/B=27-491"/>
</dbReference>
<dbReference type="PDBsum" id="1H80"/>
<dbReference type="PDBsum" id="1KTW"/>
<dbReference type="PDBsum" id="3LMW"/>
<dbReference type="SMR" id="Q9F5I8"/>
<dbReference type="DrugBank" id="DB01981">
    <property type="generic name" value="3,6-Anhydro-2-(hydrogen sulfate)-alpha-D-galactopyranose"/>
</dbReference>
<dbReference type="CAZy" id="GH82">
    <property type="family name" value="Glycoside Hydrolase Family 82"/>
</dbReference>
<dbReference type="KEGG" id="ag:CAC07801"/>
<dbReference type="BRENDA" id="3.2.1.157">
    <property type="organism ID" value="12273"/>
</dbReference>
<dbReference type="EvolutionaryTrace" id="Q9F5I8"/>
<dbReference type="GO" id="GO:0005576">
    <property type="term" value="C:extracellular region"/>
    <property type="evidence" value="ECO:0007669"/>
    <property type="project" value="UniProtKB-SubCell"/>
</dbReference>
<dbReference type="GO" id="GO:0033952">
    <property type="term" value="F:iota-carrageenase activity"/>
    <property type="evidence" value="ECO:0007669"/>
    <property type="project" value="UniProtKB-EC"/>
</dbReference>
<dbReference type="GO" id="GO:0071555">
    <property type="term" value="P:cell wall organization"/>
    <property type="evidence" value="ECO:0007669"/>
    <property type="project" value="UniProtKB-KW"/>
</dbReference>
<dbReference type="GO" id="GO:0000272">
    <property type="term" value="P:polysaccharide catabolic process"/>
    <property type="evidence" value="ECO:0007669"/>
    <property type="project" value="UniProtKB-KW"/>
</dbReference>
<dbReference type="Gene3D" id="2.160.20.10">
    <property type="entry name" value="Single-stranded right-handed beta-helix, Pectin lyase-like"/>
    <property type="match status" value="1"/>
</dbReference>
<dbReference type="InterPro" id="IPR012334">
    <property type="entry name" value="Pectin_lyas_fold"/>
</dbReference>
<dbReference type="InterPro" id="IPR011050">
    <property type="entry name" value="Pectin_lyase_fold/virulence"/>
</dbReference>
<dbReference type="InterPro" id="IPR024535">
    <property type="entry name" value="RHGA/B-epi-like_pectate_lyase"/>
</dbReference>
<dbReference type="Pfam" id="PF12708">
    <property type="entry name" value="Pect-lyase_RHGA_epim"/>
    <property type="match status" value="1"/>
</dbReference>
<dbReference type="SUPFAM" id="SSF51126">
    <property type="entry name" value="Pectin lyase-like"/>
    <property type="match status" value="1"/>
</dbReference>
<accession>Q9F5I8</accession>
<protein>
    <recommendedName>
        <fullName>Iota-carrageenase</fullName>
        <ecNumber>3.2.1.157</ecNumber>
    </recommendedName>
</protein>